<sequence>MSRMTVLSPSAGSQSACSLGLILVNPRRPLRSLSILFGLWKALIFLVIVICPGLGYDTSTSLLLYPTRDLSDVDPLHFPLSLRFVRWDSIYFVHAAEHGYVFEQEWAFGYGYTRLLALLASVLVLYRLSVNIFGGDTAKQKTLCFLSAALHIISPAGAFLSAPYGEALFSLLNISGLYLYSSSVLDAATNHRLSRDLKLLAAAVLISAATAVRSNGILGGVLFAYDALLQLPQILSRGLSLAVVSRLAVIVLGGCVIALGMAVPQYIAFNAFCMTSNAPRPWCGWTIPSIYRFVQEKYWNVGFLRYWVVPNIPLFLLAMPILALLLRSAFWAWRLPSVTSKFSENGANGALTKAMWLLPRLAIIQALLAVLAFTSYHVQIINRLSSGYPLWYWYLAAELISDFKNSQSTNKCISISAVAVQAIMIYGLIHAVLFGSFLPPA</sequence>
<comment type="function">
    <text evidence="1">Mannosyltransferase involved in glycosylphosphatidylinositol-anchor biosynthesis. Transfers the second mannose to the glycosylphosphatidylinositol during GPI precursor assembly (By similarity).</text>
</comment>
<comment type="pathway">
    <text>Glycolipid biosynthesis; glycosylphosphatidylinositol-anchor biosynthesis.</text>
</comment>
<comment type="subcellular location">
    <subcellularLocation>
        <location evidence="1">Endoplasmic reticulum membrane</location>
        <topology evidence="1">Multi-pass membrane protein</topology>
    </subcellularLocation>
</comment>
<comment type="similarity">
    <text evidence="3">Belongs to the PIGV family.</text>
</comment>
<name>GPI18_ASPFU</name>
<reference key="1">
    <citation type="journal article" date="2005" name="Nature">
        <title>Genomic sequence of the pathogenic and allergenic filamentous fungus Aspergillus fumigatus.</title>
        <authorList>
            <person name="Nierman W.C."/>
            <person name="Pain A."/>
            <person name="Anderson M.J."/>
            <person name="Wortman J.R."/>
            <person name="Kim H.S."/>
            <person name="Arroyo J."/>
            <person name="Berriman M."/>
            <person name="Abe K."/>
            <person name="Archer D.B."/>
            <person name="Bermejo C."/>
            <person name="Bennett J.W."/>
            <person name="Bowyer P."/>
            <person name="Chen D."/>
            <person name="Collins M."/>
            <person name="Coulsen R."/>
            <person name="Davies R."/>
            <person name="Dyer P.S."/>
            <person name="Farman M.L."/>
            <person name="Fedorova N."/>
            <person name="Fedorova N.D."/>
            <person name="Feldblyum T.V."/>
            <person name="Fischer R."/>
            <person name="Fosker N."/>
            <person name="Fraser A."/>
            <person name="Garcia J.L."/>
            <person name="Garcia M.J."/>
            <person name="Goble A."/>
            <person name="Goldman G.H."/>
            <person name="Gomi K."/>
            <person name="Griffith-Jones S."/>
            <person name="Gwilliam R."/>
            <person name="Haas B.J."/>
            <person name="Haas H."/>
            <person name="Harris D.E."/>
            <person name="Horiuchi H."/>
            <person name="Huang J."/>
            <person name="Humphray S."/>
            <person name="Jimenez J."/>
            <person name="Keller N."/>
            <person name="Khouri H."/>
            <person name="Kitamoto K."/>
            <person name="Kobayashi T."/>
            <person name="Konzack S."/>
            <person name="Kulkarni R."/>
            <person name="Kumagai T."/>
            <person name="Lafton A."/>
            <person name="Latge J.-P."/>
            <person name="Li W."/>
            <person name="Lord A."/>
            <person name="Lu C."/>
            <person name="Majoros W.H."/>
            <person name="May G.S."/>
            <person name="Miller B.L."/>
            <person name="Mohamoud Y."/>
            <person name="Molina M."/>
            <person name="Monod M."/>
            <person name="Mouyna I."/>
            <person name="Mulligan S."/>
            <person name="Murphy L.D."/>
            <person name="O'Neil S."/>
            <person name="Paulsen I."/>
            <person name="Penalva M.A."/>
            <person name="Pertea M."/>
            <person name="Price C."/>
            <person name="Pritchard B.L."/>
            <person name="Quail M.A."/>
            <person name="Rabbinowitsch E."/>
            <person name="Rawlins N."/>
            <person name="Rajandream M.A."/>
            <person name="Reichard U."/>
            <person name="Renauld H."/>
            <person name="Robson G.D."/>
            <person name="Rodriguez de Cordoba S."/>
            <person name="Rodriguez-Pena J.M."/>
            <person name="Ronning C.M."/>
            <person name="Rutter S."/>
            <person name="Salzberg S.L."/>
            <person name="Sanchez M."/>
            <person name="Sanchez-Ferrero J.C."/>
            <person name="Saunders D."/>
            <person name="Seeger K."/>
            <person name="Squares R."/>
            <person name="Squares S."/>
            <person name="Takeuchi M."/>
            <person name="Tekaia F."/>
            <person name="Turner G."/>
            <person name="Vazquez de Aldana C.R."/>
            <person name="Weidman J."/>
            <person name="White O."/>
            <person name="Woodward J.R."/>
            <person name="Yu J.-H."/>
            <person name="Fraser C.M."/>
            <person name="Galagan J.E."/>
            <person name="Asai K."/>
            <person name="Machida M."/>
            <person name="Hall N."/>
            <person name="Barrell B.G."/>
            <person name="Denning D.W."/>
        </authorList>
    </citation>
    <scope>NUCLEOTIDE SEQUENCE [LARGE SCALE GENOMIC DNA]</scope>
    <source>
        <strain>ATCC MYA-4609 / CBS 101355 / FGSC A1100 / Af293</strain>
    </source>
</reference>
<dbReference type="EC" id="2.4.1.-"/>
<dbReference type="EMBL" id="AAHF01000005">
    <property type="protein sequence ID" value="EAL89663.1"/>
    <property type="molecule type" value="Genomic_DNA"/>
</dbReference>
<dbReference type="RefSeq" id="XP_751701.1">
    <property type="nucleotide sequence ID" value="XM_746608.1"/>
</dbReference>
<dbReference type="FunCoup" id="Q4WQ21">
    <property type="interactions" value="288"/>
</dbReference>
<dbReference type="STRING" id="330879.Q4WQ21"/>
<dbReference type="EnsemblFungi" id="EAL89663">
    <property type="protein sequence ID" value="EAL89663"/>
    <property type="gene ID" value="AFUA_4G11280"/>
</dbReference>
<dbReference type="GeneID" id="3509064"/>
<dbReference type="KEGG" id="afm:AFUA_4G11280"/>
<dbReference type="eggNOG" id="KOG2647">
    <property type="taxonomic scope" value="Eukaryota"/>
</dbReference>
<dbReference type="HOGENOM" id="CLU_029048_0_0_1"/>
<dbReference type="InParanoid" id="Q4WQ21"/>
<dbReference type="OMA" id="WITCHAI"/>
<dbReference type="OrthoDB" id="10252502at2759"/>
<dbReference type="UniPathway" id="UPA00196"/>
<dbReference type="Proteomes" id="UP000002530">
    <property type="component" value="Chromosome 4"/>
</dbReference>
<dbReference type="GO" id="GO:0005789">
    <property type="term" value="C:endoplasmic reticulum membrane"/>
    <property type="evidence" value="ECO:0000318"/>
    <property type="project" value="GO_Central"/>
</dbReference>
<dbReference type="GO" id="GO:0031501">
    <property type="term" value="C:mannosyltransferase complex"/>
    <property type="evidence" value="ECO:0000318"/>
    <property type="project" value="GO_Central"/>
</dbReference>
<dbReference type="GO" id="GO:0000009">
    <property type="term" value="F:alpha-1,6-mannosyltransferase activity"/>
    <property type="evidence" value="ECO:0007669"/>
    <property type="project" value="InterPro"/>
</dbReference>
<dbReference type="GO" id="GO:0004376">
    <property type="term" value="F:glycolipid mannosyltransferase activity"/>
    <property type="evidence" value="ECO:0007669"/>
    <property type="project" value="InterPro"/>
</dbReference>
<dbReference type="GO" id="GO:0000030">
    <property type="term" value="F:mannosyltransferase activity"/>
    <property type="evidence" value="ECO:0000318"/>
    <property type="project" value="GO_Central"/>
</dbReference>
<dbReference type="GO" id="GO:0006506">
    <property type="term" value="P:GPI anchor biosynthetic process"/>
    <property type="evidence" value="ECO:0000318"/>
    <property type="project" value="GO_Central"/>
</dbReference>
<dbReference type="InterPro" id="IPR007315">
    <property type="entry name" value="PIG-V/Gpi18"/>
</dbReference>
<dbReference type="PANTHER" id="PTHR12468">
    <property type="entry name" value="GPI MANNOSYLTRANSFERASE 2"/>
    <property type="match status" value="1"/>
</dbReference>
<dbReference type="PANTHER" id="PTHR12468:SF2">
    <property type="entry name" value="GPI MANNOSYLTRANSFERASE 2"/>
    <property type="match status" value="1"/>
</dbReference>
<dbReference type="Pfam" id="PF04188">
    <property type="entry name" value="Mannosyl_trans2"/>
    <property type="match status" value="2"/>
</dbReference>
<protein>
    <recommendedName>
        <fullName>GPI mannosyltransferase 2</fullName>
        <ecNumber>2.4.1.-</ecNumber>
    </recommendedName>
    <alternativeName>
        <fullName>GPI mannosyltransferase II</fullName>
        <shortName>GPI-MT-II</shortName>
    </alternativeName>
    <alternativeName>
        <fullName>Glycosylphosphatidylinositol-anchor biosynthesis protein 18</fullName>
    </alternativeName>
</protein>
<gene>
    <name type="primary">gpi18</name>
    <name type="ORF">AFUA_4G11280</name>
</gene>
<accession>Q4WQ21</accession>
<evidence type="ECO:0000250" key="1"/>
<evidence type="ECO:0000255" key="2"/>
<evidence type="ECO:0000305" key="3"/>
<proteinExistence type="inferred from homology"/>
<organism>
    <name type="scientific">Aspergillus fumigatus (strain ATCC MYA-4609 / CBS 101355 / FGSC A1100 / Af293)</name>
    <name type="common">Neosartorya fumigata</name>
    <dbReference type="NCBI Taxonomy" id="330879"/>
    <lineage>
        <taxon>Eukaryota</taxon>
        <taxon>Fungi</taxon>
        <taxon>Dikarya</taxon>
        <taxon>Ascomycota</taxon>
        <taxon>Pezizomycotina</taxon>
        <taxon>Eurotiomycetes</taxon>
        <taxon>Eurotiomycetidae</taxon>
        <taxon>Eurotiales</taxon>
        <taxon>Aspergillaceae</taxon>
        <taxon>Aspergillus</taxon>
        <taxon>Aspergillus subgen. Fumigati</taxon>
    </lineage>
</organism>
<feature type="chain" id="PRO_0000246240" description="GPI mannosyltransferase 2">
    <location>
        <begin position="1"/>
        <end position="441"/>
    </location>
</feature>
<feature type="transmembrane region" description="Helical" evidence="2">
    <location>
        <begin position="4"/>
        <end position="24"/>
    </location>
</feature>
<feature type="transmembrane region" description="Helical" evidence="2">
    <location>
        <begin position="35"/>
        <end position="55"/>
    </location>
</feature>
<feature type="transmembrane region" description="Helical" evidence="2">
    <location>
        <begin position="115"/>
        <end position="135"/>
    </location>
</feature>
<feature type="transmembrane region" description="Helical" evidence="2">
    <location>
        <begin position="143"/>
        <end position="163"/>
    </location>
</feature>
<feature type="transmembrane region" description="Helical" evidence="2">
    <location>
        <begin position="165"/>
        <end position="185"/>
    </location>
</feature>
<feature type="transmembrane region" description="Helical" evidence="2">
    <location>
        <begin position="199"/>
        <end position="223"/>
    </location>
</feature>
<feature type="transmembrane region" description="Helical" evidence="2">
    <location>
        <begin position="249"/>
        <end position="269"/>
    </location>
</feature>
<feature type="transmembrane region" description="Helical" evidence="2">
    <location>
        <begin position="306"/>
        <end position="326"/>
    </location>
</feature>
<feature type="transmembrane region" description="Helical" evidence="2">
    <location>
        <begin position="361"/>
        <end position="381"/>
    </location>
</feature>
<feature type="transmembrane region" description="Helical" evidence="2">
    <location>
        <begin position="418"/>
        <end position="438"/>
    </location>
</feature>
<keyword id="KW-0256">Endoplasmic reticulum</keyword>
<keyword id="KW-0328">Glycosyltransferase</keyword>
<keyword id="KW-0337">GPI-anchor biosynthesis</keyword>
<keyword id="KW-0472">Membrane</keyword>
<keyword id="KW-1185">Reference proteome</keyword>
<keyword id="KW-0808">Transferase</keyword>
<keyword id="KW-0812">Transmembrane</keyword>
<keyword id="KW-1133">Transmembrane helix</keyword>